<proteinExistence type="inferred from homology"/>
<sequence>MANSTTINGYNSGLDIKNIVSTLVAAEKAPKEAQLKRLESDTTAKFTGIGQLKSAISDLQTILKELNKPELFQKRSASTSDEKFATATATKDALPGIYKLEVTQLASVSKVATASFADGYKTTSGGTLTIKQGADDAGVTVNVAAGATLAEVRDSLNAQLKDKGITANIVNNPGDGTSRLVFTGKDSGAGKDVFVQGSSGLENFNIGSVGADGKLTLSQLDGTSSSSSGYITQAKNAKFSIDGLTLESPTNTVDKVINGVTFELKTVTDTNKPITISVEQDRGGVKDNIKKFVEAYNKLVGVTSELTGVTKVGDDKAPVVGALVGDSSVRNLLTTMRNEMVQPGQGTDVRMLADMGITTKKDGTLEIDDKKLDKVLKDKFESVSALFTGDTGLMKRLDDKLTPYTQTGGVLQQRLDGLQDTIKSVDTQREALNRRVEQLQDRLLKQFTAMDQLIGQLNQTSGRMAQALSSLPGLVKKS</sequence>
<gene>
    <name type="primary">fliD</name>
</gene>
<evidence type="ECO:0000250" key="1"/>
<evidence type="ECO:0000255" key="2"/>
<evidence type="ECO:0000269" key="3">
    <source>
    </source>
</evidence>
<evidence type="ECO:0000305" key="4"/>
<accession>O33421</accession>
<accession>Q51456</accession>
<accession>Q9LAG5</accession>
<accession>Q9LAG6</accession>
<feature type="chain" id="PRO_0000177021" description="A-type flagellar hook-associated protein 2">
    <location>
        <begin position="1"/>
        <end position="478"/>
    </location>
</feature>
<feature type="coiled-coil region" evidence="2">
    <location>
        <begin position="409"/>
        <end position="460"/>
    </location>
</feature>
<feature type="sequence variant" description="In strain: PA103 and CS32.">
    <original>T</original>
    <variation>S</variation>
    <location>
        <position position="166"/>
    </location>
</feature>
<feature type="sequence variant" description="In strain: PA103.">
    <original>K</original>
    <variation>R</variation>
    <location>
        <position position="235"/>
    </location>
</feature>
<feature type="sequence variant" description="In strain: DG1.">
    <original>TDVRML</original>
    <variation>DLQACV</variation>
    <location>
        <begin position="347"/>
        <end position="352"/>
    </location>
</feature>
<feature type="sequence variant" description="In strain: PA103 and CS32.">
    <original>E</original>
    <variation>Q</variation>
    <location>
        <position position="430"/>
    </location>
</feature>
<feature type="sequence variant" description="In strain: PA103.">
    <original>N</original>
    <variation>D</variation>
    <location>
        <position position="433"/>
    </location>
</feature>
<organism>
    <name type="scientific">Pseudomonas aeruginosa</name>
    <dbReference type="NCBI Taxonomy" id="287"/>
    <lineage>
        <taxon>Bacteria</taxon>
        <taxon>Pseudomonadati</taxon>
        <taxon>Pseudomonadota</taxon>
        <taxon>Gammaproteobacteria</taxon>
        <taxon>Pseudomonadales</taxon>
        <taxon>Pseudomonadaceae</taxon>
        <taxon>Pseudomonas</taxon>
    </lineage>
</organism>
<keyword id="KW-0975">Bacterial flagellum</keyword>
<keyword id="KW-0175">Coiled coil</keyword>
<keyword id="KW-0964">Secreted</keyword>
<comment type="function">
    <text evidence="3">Required for the morphogenesis and for the elongation of the flagellar filament by facilitating polymerization of the flagellin monomers at the tip of growing filament. Forms a capping structure, which prevents flagellin subunits (transported through the central channel of the flagellum) from leaking out without polymerization at the distal end. Essential for motility. Responsible for adhesion to mucin, which is the initial event in colonization by this organism of the airways of cystic fibrosis patients.</text>
</comment>
<comment type="subunit">
    <text evidence="1">Homopentamer.</text>
</comment>
<comment type="subcellular location">
    <subcellularLocation>
        <location>Secreted</location>
    </subcellularLocation>
    <subcellularLocation>
        <location>Bacterial flagellum</location>
    </subcellularLocation>
</comment>
<comment type="similarity">
    <text evidence="4">Belongs to the FliD family.</text>
</comment>
<name>FLID1_PSEAI</name>
<protein>
    <recommendedName>
        <fullName>A-type flagellar hook-associated protein 2</fullName>
        <shortName>HAP2</shortName>
    </recommendedName>
    <alternativeName>
        <fullName>Filament cap protein</fullName>
    </alternativeName>
    <alternativeName>
        <fullName>Flagellar cap protein</fullName>
    </alternativeName>
</protein>
<dbReference type="EMBL" id="L81176">
    <property type="protein sequence ID" value="AAC09391.1"/>
    <property type="molecule type" value="Genomic_DNA"/>
</dbReference>
<dbReference type="EMBL" id="AF139824">
    <property type="protein sequence ID" value="AAF35981.1"/>
    <property type="molecule type" value="Genomic_DNA"/>
</dbReference>
<dbReference type="EMBL" id="AF139823">
    <property type="protein sequence ID" value="AAF35979.1"/>
    <property type="molecule type" value="Genomic_DNA"/>
</dbReference>
<dbReference type="EMBL" id="AF139825">
    <property type="protein sequence ID" value="AAF35983.1"/>
    <property type="molecule type" value="Genomic_DNA"/>
</dbReference>
<dbReference type="EMBL" id="AF139822">
    <property type="protein sequence ID" value="AAF35977.1"/>
    <property type="molecule type" value="Genomic_DNA"/>
</dbReference>
<dbReference type="EMBL" id="L43064">
    <property type="protein sequence ID" value="AAA99299.1"/>
    <property type="molecule type" value="Genomic_DNA"/>
</dbReference>
<dbReference type="RefSeq" id="WP_003123161.1">
    <property type="nucleotide sequence ID" value="NZ_WXZX01000001.1"/>
</dbReference>
<dbReference type="RefSeq" id="WP_043083576.1">
    <property type="nucleotide sequence ID" value="NZ_WCHW01000009.1"/>
</dbReference>
<dbReference type="SMR" id="O33421"/>
<dbReference type="PATRIC" id="fig|287.1479.peg.3135"/>
<dbReference type="eggNOG" id="COG1345">
    <property type="taxonomic scope" value="Bacteria"/>
</dbReference>
<dbReference type="GO" id="GO:0009421">
    <property type="term" value="C:bacterial-type flagellum filament cap"/>
    <property type="evidence" value="ECO:0007669"/>
    <property type="project" value="InterPro"/>
</dbReference>
<dbReference type="GO" id="GO:0009424">
    <property type="term" value="C:bacterial-type flagellum hook"/>
    <property type="evidence" value="ECO:0007669"/>
    <property type="project" value="InterPro"/>
</dbReference>
<dbReference type="GO" id="GO:0005576">
    <property type="term" value="C:extracellular region"/>
    <property type="evidence" value="ECO:0007669"/>
    <property type="project" value="UniProtKB-SubCell"/>
</dbReference>
<dbReference type="GO" id="GO:0071973">
    <property type="term" value="P:bacterial-type flagellum-dependent cell motility"/>
    <property type="evidence" value="ECO:0007669"/>
    <property type="project" value="TreeGrafter"/>
</dbReference>
<dbReference type="GO" id="GO:0007155">
    <property type="term" value="P:cell adhesion"/>
    <property type="evidence" value="ECO:0007669"/>
    <property type="project" value="InterPro"/>
</dbReference>
<dbReference type="InterPro" id="IPR010810">
    <property type="entry name" value="Flagellin_hook_IN_motif"/>
</dbReference>
<dbReference type="InterPro" id="IPR040026">
    <property type="entry name" value="FliD"/>
</dbReference>
<dbReference type="InterPro" id="IPR010809">
    <property type="entry name" value="FliD_C"/>
</dbReference>
<dbReference type="InterPro" id="IPR003481">
    <property type="entry name" value="FliD_N"/>
</dbReference>
<dbReference type="PANTHER" id="PTHR30288">
    <property type="entry name" value="FLAGELLAR CAP/ASSEMBLY PROTEIN FLID"/>
    <property type="match status" value="1"/>
</dbReference>
<dbReference type="PANTHER" id="PTHR30288:SF0">
    <property type="entry name" value="FLAGELLAR HOOK-ASSOCIATED PROTEIN 2"/>
    <property type="match status" value="1"/>
</dbReference>
<dbReference type="Pfam" id="PF07196">
    <property type="entry name" value="Flagellin_IN"/>
    <property type="match status" value="1"/>
</dbReference>
<dbReference type="Pfam" id="PF07195">
    <property type="entry name" value="FliD_C"/>
    <property type="match status" value="1"/>
</dbReference>
<dbReference type="Pfam" id="PF02465">
    <property type="entry name" value="FliD_N"/>
    <property type="match status" value="1"/>
</dbReference>
<reference key="1">
    <citation type="journal article" date="1998" name="Infect. Immun.">
        <title>The Pseudomonas aeruginosa flagellar cap protein, FliD, is responsible for mucin adhesion.</title>
        <authorList>
            <person name="Arora S.K."/>
            <person name="Ritchings B.W."/>
            <person name="Almira E.C."/>
            <person name="Lory S."/>
            <person name="Ramphal R."/>
        </authorList>
    </citation>
    <scope>NUCLEOTIDE SEQUENCE [GENOMIC DNA]</scope>
    <scope>FUNCTION</scope>
    <source>
        <strain>PAK</strain>
    </source>
</reference>
<reference key="2">
    <citation type="journal article" date="2000" name="Infect. Immun.">
        <title>Identification of two distinct types of flagellar cap proteins, FliD, in Pseudomonas aeruginosa.</title>
        <authorList>
            <person name="Arora S.K."/>
            <person name="Dasgupta N."/>
            <person name="Lory S."/>
            <person name="Ramphal R."/>
        </authorList>
    </citation>
    <scope>NUCLEOTIDE SEQUENCE [GENOMIC DNA]</scope>
    <source>
        <strain>ATCC 29260 / PA103</strain>
        <strain>CS2</strain>
        <strain>CS32</strain>
        <strain>PAK</strain>
    </source>
</reference>
<reference key="3">
    <citation type="submission" date="1995-06" db="EMBL/GenBank/DDBJ databases">
        <authorList>
            <person name="Wahl S.A."/>
            <person name="Darzins A."/>
            <person name="Baker N.R."/>
        </authorList>
    </citation>
    <scope>NUCLEOTIDE SEQUENCE [GENOMIC DNA] OF 347-478</scope>
    <source>
        <strain>DG1</strain>
    </source>
</reference>